<protein>
    <recommendedName>
        <fullName>Uncharacterized protein Rv3630</fullName>
    </recommendedName>
</protein>
<comment type="subcellular location">
    <subcellularLocation>
        <location evidence="2">Cell membrane</location>
        <topology evidence="2">Multi-pass membrane protein</topology>
    </subcellularLocation>
</comment>
<comment type="similarity">
    <text evidence="2">To M.tuberculosis Rv1510 and M.bovis Mb3654.</text>
</comment>
<gene>
    <name type="ordered locus">Rv3630</name>
    <name type="ORF">MTCY15C10.22c</name>
</gene>
<keyword id="KW-1003">Cell membrane</keyword>
<keyword id="KW-0472">Membrane</keyword>
<keyword id="KW-1185">Reference proteome</keyword>
<keyword id="KW-0812">Transmembrane</keyword>
<keyword id="KW-1133">Transmembrane helix</keyword>
<name>Y3630_MYCTU</name>
<accession>P9WKX9</accession>
<accession>L0TD37</accession>
<accession>O06377</accession>
<reference key="1">
    <citation type="journal article" date="1998" name="Nature">
        <title>Deciphering the biology of Mycobacterium tuberculosis from the complete genome sequence.</title>
        <authorList>
            <person name="Cole S.T."/>
            <person name="Brosch R."/>
            <person name="Parkhill J."/>
            <person name="Garnier T."/>
            <person name="Churcher C.M."/>
            <person name="Harris D.E."/>
            <person name="Gordon S.V."/>
            <person name="Eiglmeier K."/>
            <person name="Gas S."/>
            <person name="Barry C.E. III"/>
            <person name="Tekaia F."/>
            <person name="Badcock K."/>
            <person name="Basham D."/>
            <person name="Brown D."/>
            <person name="Chillingworth T."/>
            <person name="Connor R."/>
            <person name="Davies R.M."/>
            <person name="Devlin K."/>
            <person name="Feltwell T."/>
            <person name="Gentles S."/>
            <person name="Hamlin N."/>
            <person name="Holroyd S."/>
            <person name="Hornsby T."/>
            <person name="Jagels K."/>
            <person name="Krogh A."/>
            <person name="McLean J."/>
            <person name="Moule S."/>
            <person name="Murphy L.D."/>
            <person name="Oliver S."/>
            <person name="Osborne J."/>
            <person name="Quail M.A."/>
            <person name="Rajandream M.A."/>
            <person name="Rogers J."/>
            <person name="Rutter S."/>
            <person name="Seeger K."/>
            <person name="Skelton S."/>
            <person name="Squares S."/>
            <person name="Squares R."/>
            <person name="Sulston J.E."/>
            <person name="Taylor K."/>
            <person name="Whitehead S."/>
            <person name="Barrell B.G."/>
        </authorList>
    </citation>
    <scope>NUCLEOTIDE SEQUENCE [LARGE SCALE GENOMIC DNA]</scope>
    <source>
        <strain>ATCC 25618 / H37Rv</strain>
    </source>
</reference>
<dbReference type="EMBL" id="AL123456">
    <property type="protein sequence ID" value="CCP46453.1"/>
    <property type="molecule type" value="Genomic_DNA"/>
</dbReference>
<dbReference type="PIR" id="G70561">
    <property type="entry name" value="G70561"/>
</dbReference>
<dbReference type="RefSeq" id="NP_218147.1">
    <property type="nucleotide sequence ID" value="NC_000962.3"/>
</dbReference>
<dbReference type="RefSeq" id="WP_009936103.1">
    <property type="nucleotide sequence ID" value="NZ_NVQJ01000045.1"/>
</dbReference>
<dbReference type="SMR" id="P9WKX9"/>
<dbReference type="STRING" id="83332.Rv3630"/>
<dbReference type="PaxDb" id="83332-Rv3630"/>
<dbReference type="DNASU" id="885802"/>
<dbReference type="GeneID" id="885802"/>
<dbReference type="KEGG" id="mtu:Rv3630"/>
<dbReference type="KEGG" id="mtv:RVBD_3630"/>
<dbReference type="PATRIC" id="fig|83332.111.peg.4036"/>
<dbReference type="TubercuList" id="Rv3630"/>
<dbReference type="eggNOG" id="COG2244">
    <property type="taxonomic scope" value="Bacteria"/>
</dbReference>
<dbReference type="InParanoid" id="P9WKX9"/>
<dbReference type="OrthoDB" id="4382106at2"/>
<dbReference type="PhylomeDB" id="P9WKX9"/>
<dbReference type="Proteomes" id="UP000001584">
    <property type="component" value="Chromosome"/>
</dbReference>
<dbReference type="GO" id="GO:0005576">
    <property type="term" value="C:extracellular region"/>
    <property type="evidence" value="ECO:0000314"/>
    <property type="project" value="MTBBASE"/>
</dbReference>
<dbReference type="GO" id="GO:0005886">
    <property type="term" value="C:plasma membrane"/>
    <property type="evidence" value="ECO:0000318"/>
    <property type="project" value="GO_Central"/>
</dbReference>
<dbReference type="InterPro" id="IPR050833">
    <property type="entry name" value="Poly_Biosynth_Transport"/>
</dbReference>
<dbReference type="PANTHER" id="PTHR30250:SF11">
    <property type="entry name" value="O-ANTIGEN TRANSPORTER-RELATED"/>
    <property type="match status" value="1"/>
</dbReference>
<dbReference type="PANTHER" id="PTHR30250">
    <property type="entry name" value="PST FAMILY PREDICTED COLANIC ACID TRANSPORTER"/>
    <property type="match status" value="1"/>
</dbReference>
<feature type="chain" id="PRO_0000104142" description="Uncharacterized protein Rv3630">
    <location>
        <begin position="1"/>
        <end position="431"/>
    </location>
</feature>
<feature type="transmembrane region" description="Helical" evidence="1">
    <location>
        <begin position="33"/>
        <end position="53"/>
    </location>
</feature>
<feature type="transmembrane region" description="Helical" evidence="1">
    <location>
        <begin position="63"/>
        <end position="83"/>
    </location>
</feature>
<feature type="transmembrane region" description="Helical" evidence="1">
    <location>
        <begin position="111"/>
        <end position="131"/>
    </location>
</feature>
<feature type="transmembrane region" description="Helical" evidence="1">
    <location>
        <begin position="143"/>
        <end position="163"/>
    </location>
</feature>
<feature type="transmembrane region" description="Helical" evidence="1">
    <location>
        <begin position="175"/>
        <end position="195"/>
    </location>
</feature>
<feature type="transmembrane region" description="Helical" evidence="1">
    <location>
        <begin position="197"/>
        <end position="217"/>
    </location>
</feature>
<feature type="transmembrane region" description="Helical" evidence="1">
    <location>
        <begin position="241"/>
        <end position="261"/>
    </location>
</feature>
<feature type="transmembrane region" description="Helical" evidence="1">
    <location>
        <begin position="273"/>
        <end position="293"/>
    </location>
</feature>
<feature type="transmembrane region" description="Helical" evidence="1">
    <location>
        <begin position="318"/>
        <end position="338"/>
    </location>
</feature>
<feature type="transmembrane region" description="Helical" evidence="1">
    <location>
        <begin position="358"/>
        <end position="378"/>
    </location>
</feature>
<feature type="transmembrane region" description="Helical" evidence="1">
    <location>
        <begin position="381"/>
        <end position="401"/>
    </location>
</feature>
<feature type="transmembrane region" description="Helical" evidence="1">
    <location>
        <begin position="407"/>
        <end position="427"/>
    </location>
</feature>
<proteinExistence type="predicted"/>
<evidence type="ECO:0000255" key="1"/>
<evidence type="ECO:0000305" key="2"/>
<sequence length="431" mass="43485">MAVGAAAVTEVGDTASPVGSSGASGGAIASGSVARVGTAAAVTALCGYAVIYLAARNLAPNGFSVFGVFWGAFGLVTGAANGLLQETTREVRSLGYLDVSADGRRTHPLRVSGMVGLGSLVVIAGSSPLWSGRVFAEARWLSVALLSIGLAGFCLHATLLGMLAGTNRWTQYGALMVADAVIRVVVAAATFVIGWQLVGFIWATVAGSVAWLIMLMTSPPTRAAARLMTPGATATFLRGAAHSIIAAGASAILVMGFPVLLKLTSNELGAQGGVVILAVTLTRAPLLVPLTAMQGNLIAHFVDERTERIRALIAPAALIGGVGAVGMLAAGVVGPWIMRVAFGSEYQSSSALLAWLTAAAVAIAMLTLTGAAAVAAALHRAYSLGWVGATVGSGLLLLLPLSLETRTVVALLCGPLVGIGVHLVALARTDE</sequence>
<organism>
    <name type="scientific">Mycobacterium tuberculosis (strain ATCC 25618 / H37Rv)</name>
    <dbReference type="NCBI Taxonomy" id="83332"/>
    <lineage>
        <taxon>Bacteria</taxon>
        <taxon>Bacillati</taxon>
        <taxon>Actinomycetota</taxon>
        <taxon>Actinomycetes</taxon>
        <taxon>Mycobacteriales</taxon>
        <taxon>Mycobacteriaceae</taxon>
        <taxon>Mycobacterium</taxon>
        <taxon>Mycobacterium tuberculosis complex</taxon>
    </lineage>
</organism>